<name>CL042_HUMAN</name>
<gene>
    <name type="primary">C12orf42</name>
</gene>
<evidence type="ECO:0000256" key="1">
    <source>
        <dbReference type="SAM" id="MobiDB-lite"/>
    </source>
</evidence>
<evidence type="ECO:0000269" key="2">
    <source>
    </source>
</evidence>
<evidence type="ECO:0000269" key="3">
    <source>
    </source>
</evidence>
<evidence type="ECO:0000303" key="4">
    <source>
    </source>
</evidence>
<evidence type="ECO:0000305" key="5"/>
<accession>Q96LP6</accession>
<accession>Q49A64</accession>
<accession>Q4G0S2</accession>
<organism>
    <name type="scientific">Homo sapiens</name>
    <name type="common">Human</name>
    <dbReference type="NCBI Taxonomy" id="9606"/>
    <lineage>
        <taxon>Eukaryota</taxon>
        <taxon>Metazoa</taxon>
        <taxon>Chordata</taxon>
        <taxon>Craniata</taxon>
        <taxon>Vertebrata</taxon>
        <taxon>Euteleostomi</taxon>
        <taxon>Mammalia</taxon>
        <taxon>Eutheria</taxon>
        <taxon>Euarchontoglires</taxon>
        <taxon>Primates</taxon>
        <taxon>Haplorrhini</taxon>
        <taxon>Catarrhini</taxon>
        <taxon>Hominidae</taxon>
        <taxon>Homo</taxon>
    </lineage>
</organism>
<keyword id="KW-0025">Alternative splicing</keyword>
<keyword id="KW-1267">Proteomics identification</keyword>
<keyword id="KW-1185">Reference proteome</keyword>
<feature type="chain" id="PRO_0000274274" description="Uncharacterized protein C12orf42">
    <location>
        <begin position="1"/>
        <end position="360"/>
    </location>
</feature>
<feature type="region of interest" description="Disordered" evidence="1">
    <location>
        <begin position="193"/>
        <end position="245"/>
    </location>
</feature>
<feature type="compositionally biased region" description="Polar residues" evidence="1">
    <location>
        <begin position="202"/>
        <end position="212"/>
    </location>
</feature>
<feature type="compositionally biased region" description="Polar residues" evidence="1">
    <location>
        <begin position="225"/>
        <end position="241"/>
    </location>
</feature>
<feature type="splice variant" id="VSP_022691" description="In isoform 2." evidence="4">
    <location>
        <begin position="1"/>
        <end position="95"/>
    </location>
</feature>
<feature type="splice variant" id="VSP_022692" description="In isoform 3." evidence="4">
    <original>VFPERTQNSMACKRLLHTCQY</original>
    <variation>GSHHGQATQKLQGAMVLHLEE</variation>
    <location>
        <begin position="87"/>
        <end position="107"/>
    </location>
</feature>
<feature type="splice variant" id="VSP_022693" description="In isoform 3." evidence="4">
    <location>
        <begin position="108"/>
        <end position="360"/>
    </location>
</feature>
<feature type="sequence variant" id="VAR_030229" description="In dbSNP:rs10778257." evidence="2 3">
    <original>E</original>
    <variation>D</variation>
    <location>
        <position position="11"/>
    </location>
</feature>
<feature type="sequence variant" id="VAR_030230" description="In dbSNP:rs7484376.">
    <original>P</original>
    <variation>R</variation>
    <location>
        <position position="182"/>
    </location>
</feature>
<feature type="sequence conflict" description="In Ref. 3; BC039352." evidence="5" ref="3">
    <original>A</original>
    <variation>D</variation>
    <location>
        <position position="38"/>
    </location>
</feature>
<dbReference type="EMBL" id="AK058052">
    <property type="protein sequence ID" value="BAB71641.1"/>
    <property type="molecule type" value="mRNA"/>
</dbReference>
<dbReference type="EMBL" id="AC084364">
    <property type="status" value="NOT_ANNOTATED_CDS"/>
    <property type="molecule type" value="Genomic_DNA"/>
</dbReference>
<dbReference type="EMBL" id="AC090000">
    <property type="status" value="NOT_ANNOTATED_CDS"/>
    <property type="molecule type" value="Genomic_DNA"/>
</dbReference>
<dbReference type="EMBL" id="AC126176">
    <property type="status" value="NOT_ANNOTATED_CDS"/>
    <property type="molecule type" value="Genomic_DNA"/>
</dbReference>
<dbReference type="EMBL" id="BC039352">
    <property type="status" value="NOT_ANNOTATED_CDS"/>
    <property type="molecule type" value="mRNA"/>
</dbReference>
<dbReference type="EMBL" id="BC044617">
    <property type="protein sequence ID" value="AAH44617.1"/>
    <property type="molecule type" value="mRNA"/>
</dbReference>
<dbReference type="EMBL" id="BC117392">
    <property type="protein sequence ID" value="AAI17393.1"/>
    <property type="molecule type" value="mRNA"/>
</dbReference>
<dbReference type="EMBL" id="BC117394">
    <property type="protein sequence ID" value="AAI17395.1"/>
    <property type="molecule type" value="mRNA"/>
</dbReference>
<dbReference type="CCDS" id="CCDS44963.1">
    <molecule id="Q96LP6-1"/>
</dbReference>
<dbReference type="RefSeq" id="NP_001092806.1">
    <molecule id="Q96LP6-1"/>
    <property type="nucleotide sequence ID" value="NM_001099336.3"/>
</dbReference>
<dbReference type="RefSeq" id="NP_001265348.1">
    <molecule id="Q96LP6-2"/>
    <property type="nucleotide sequence ID" value="NM_001278419.3"/>
</dbReference>
<dbReference type="RefSeq" id="NP_001265349.1">
    <molecule id="Q96LP6-2"/>
    <property type="nucleotide sequence ID" value="NM_001278420.3"/>
</dbReference>
<dbReference type="RefSeq" id="NP_001373800.1">
    <molecule id="Q96LP6-2"/>
    <property type="nucleotide sequence ID" value="NM_001386871.1"/>
</dbReference>
<dbReference type="RefSeq" id="NP_940923.2">
    <molecule id="Q96LP6-1"/>
    <property type="nucleotide sequence ID" value="NM_198521.5"/>
</dbReference>
<dbReference type="RefSeq" id="XP_011536594.1">
    <molecule id="Q96LP6-1"/>
    <property type="nucleotide sequence ID" value="XM_011538292.3"/>
</dbReference>
<dbReference type="RefSeq" id="XP_011536595.1">
    <molecule id="Q96LP6-1"/>
    <property type="nucleotide sequence ID" value="XM_011538293.3"/>
</dbReference>
<dbReference type="RefSeq" id="XP_016874765.1">
    <molecule id="Q96LP6-1"/>
    <property type="nucleotide sequence ID" value="XM_017019276.2"/>
</dbReference>
<dbReference type="RefSeq" id="XP_047284759.1">
    <molecule id="Q96LP6-1"/>
    <property type="nucleotide sequence ID" value="XM_047428803.1"/>
</dbReference>
<dbReference type="RefSeq" id="XP_054227954.1">
    <molecule id="Q96LP6-1"/>
    <property type="nucleotide sequence ID" value="XM_054371979.1"/>
</dbReference>
<dbReference type="RefSeq" id="XP_054227955.1">
    <molecule id="Q96LP6-1"/>
    <property type="nucleotide sequence ID" value="XM_054371980.1"/>
</dbReference>
<dbReference type="RefSeq" id="XP_054227956.1">
    <molecule id="Q96LP6-1"/>
    <property type="nucleotide sequence ID" value="XM_054371981.1"/>
</dbReference>
<dbReference type="RefSeq" id="XP_054227957.1">
    <molecule id="Q96LP6-1"/>
    <property type="nucleotide sequence ID" value="XM_054371982.1"/>
</dbReference>
<dbReference type="STRING" id="9606.ENSP00000367353"/>
<dbReference type="iPTMnet" id="Q96LP6"/>
<dbReference type="PhosphoSitePlus" id="Q96LP6"/>
<dbReference type="BioMuta" id="C12orf42"/>
<dbReference type="jPOST" id="Q96LP6"/>
<dbReference type="MassIVE" id="Q96LP6"/>
<dbReference type="PaxDb" id="9606-ENSP00000367353"/>
<dbReference type="PeptideAtlas" id="Q96LP6"/>
<dbReference type="Antibodypedia" id="30495">
    <property type="antibodies" value="56 antibodies from 13 providers"/>
</dbReference>
<dbReference type="DNASU" id="374470"/>
<dbReference type="Ensembl" id="ENST00000378113.7">
    <molecule id="Q96LP6-1"/>
    <property type="protein sequence ID" value="ENSP00000367353.2"/>
    <property type="gene ID" value="ENSG00000179088.16"/>
</dbReference>
<dbReference type="Ensembl" id="ENST00000547347.5">
    <molecule id="Q96LP6-3"/>
    <property type="protein sequence ID" value="ENSP00000446908.1"/>
    <property type="gene ID" value="ENSG00000179088.16"/>
</dbReference>
<dbReference type="Ensembl" id="ENST00000548883.6">
    <molecule id="Q96LP6-1"/>
    <property type="protein sequence ID" value="ENSP00000447908.1"/>
    <property type="gene ID" value="ENSG00000179088.16"/>
</dbReference>
<dbReference type="GeneID" id="374470"/>
<dbReference type="KEGG" id="hsa:374470"/>
<dbReference type="MANE-Select" id="ENST00000548883.6">
    <property type="protein sequence ID" value="ENSP00000447908.1"/>
    <property type="RefSeq nucleotide sequence ID" value="NM_198521.5"/>
    <property type="RefSeq protein sequence ID" value="NP_940923.2"/>
</dbReference>
<dbReference type="UCSC" id="uc001tjt.4">
    <molecule id="Q96LP6-1"/>
    <property type="organism name" value="human"/>
</dbReference>
<dbReference type="AGR" id="HGNC:24729"/>
<dbReference type="CTD" id="374470"/>
<dbReference type="DisGeNET" id="374470"/>
<dbReference type="GeneCards" id="C12orf42"/>
<dbReference type="HGNC" id="HGNC:24729">
    <property type="gene designation" value="C12orf42"/>
</dbReference>
<dbReference type="HPA" id="ENSG00000179088">
    <property type="expression patterns" value="Tissue enriched (testis)"/>
</dbReference>
<dbReference type="neXtProt" id="NX_Q96LP6"/>
<dbReference type="OpenTargets" id="ENSG00000179088"/>
<dbReference type="PharmGKB" id="PA143485372"/>
<dbReference type="VEuPathDB" id="HostDB:ENSG00000179088"/>
<dbReference type="eggNOG" id="ENOG502RVJS">
    <property type="taxonomic scope" value="Eukaryota"/>
</dbReference>
<dbReference type="GeneTree" id="ENSGT00390000015477"/>
<dbReference type="HOGENOM" id="CLU_2440222_0_0_1"/>
<dbReference type="InParanoid" id="Q96LP6"/>
<dbReference type="OMA" id="LIFTVRQ"/>
<dbReference type="OrthoDB" id="9836947at2759"/>
<dbReference type="PAN-GO" id="Q96LP6">
    <property type="GO annotations" value="0 GO annotations based on evolutionary models"/>
</dbReference>
<dbReference type="PhylomeDB" id="Q96LP6"/>
<dbReference type="TreeFam" id="TF338230"/>
<dbReference type="PathwayCommons" id="Q96LP6"/>
<dbReference type="BioGRID-ORCS" id="374470">
    <property type="hits" value="10 hits in 1110 CRISPR screens"/>
</dbReference>
<dbReference type="ChiTaRS" id="C12orf42">
    <property type="organism name" value="human"/>
</dbReference>
<dbReference type="GenomeRNAi" id="374470"/>
<dbReference type="Pharos" id="Q96LP6">
    <property type="development level" value="Tdark"/>
</dbReference>
<dbReference type="PRO" id="PR:Q96LP6"/>
<dbReference type="Proteomes" id="UP000005640">
    <property type="component" value="Chromosome 12"/>
</dbReference>
<dbReference type="RNAct" id="Q96LP6">
    <property type="molecule type" value="protein"/>
</dbReference>
<dbReference type="Bgee" id="ENSG00000179088">
    <property type="expression patterns" value="Expressed in sperm and 105 other cell types or tissues"/>
</dbReference>
<dbReference type="ExpressionAtlas" id="Q96LP6">
    <property type="expression patterns" value="baseline and differential"/>
</dbReference>
<dbReference type="InterPro" id="IPR029288">
    <property type="entry name" value="DUF4607"/>
</dbReference>
<dbReference type="PANTHER" id="PTHR40708">
    <property type="entry name" value="RIKEN CDNA 1700113H08 GENE"/>
    <property type="match status" value="1"/>
</dbReference>
<dbReference type="PANTHER" id="PTHR40708:SF1">
    <property type="entry name" value="RIKEN CDNA 1700113H08 GENE"/>
    <property type="match status" value="1"/>
</dbReference>
<dbReference type="Pfam" id="PF15380">
    <property type="entry name" value="DUF4607"/>
    <property type="match status" value="1"/>
</dbReference>
<protein>
    <recommendedName>
        <fullName>Uncharacterized protein C12orf42</fullName>
    </recommendedName>
</protein>
<proteinExistence type="evidence at protein level"/>
<reference key="1">
    <citation type="journal article" date="2004" name="Nat. Genet.">
        <title>Complete sequencing and characterization of 21,243 full-length human cDNAs.</title>
        <authorList>
            <person name="Ota T."/>
            <person name="Suzuki Y."/>
            <person name="Nishikawa T."/>
            <person name="Otsuki T."/>
            <person name="Sugiyama T."/>
            <person name="Irie R."/>
            <person name="Wakamatsu A."/>
            <person name="Hayashi K."/>
            <person name="Sato H."/>
            <person name="Nagai K."/>
            <person name="Kimura K."/>
            <person name="Makita H."/>
            <person name="Sekine M."/>
            <person name="Obayashi M."/>
            <person name="Nishi T."/>
            <person name="Shibahara T."/>
            <person name="Tanaka T."/>
            <person name="Ishii S."/>
            <person name="Yamamoto J."/>
            <person name="Saito K."/>
            <person name="Kawai Y."/>
            <person name="Isono Y."/>
            <person name="Nakamura Y."/>
            <person name="Nagahari K."/>
            <person name="Murakami K."/>
            <person name="Yasuda T."/>
            <person name="Iwayanagi T."/>
            <person name="Wagatsuma M."/>
            <person name="Shiratori A."/>
            <person name="Sudo H."/>
            <person name="Hosoiri T."/>
            <person name="Kaku Y."/>
            <person name="Kodaira H."/>
            <person name="Kondo H."/>
            <person name="Sugawara M."/>
            <person name="Takahashi M."/>
            <person name="Kanda K."/>
            <person name="Yokoi T."/>
            <person name="Furuya T."/>
            <person name="Kikkawa E."/>
            <person name="Omura Y."/>
            <person name="Abe K."/>
            <person name="Kamihara K."/>
            <person name="Katsuta N."/>
            <person name="Sato K."/>
            <person name="Tanikawa M."/>
            <person name="Yamazaki M."/>
            <person name="Ninomiya K."/>
            <person name="Ishibashi T."/>
            <person name="Yamashita H."/>
            <person name="Murakawa K."/>
            <person name="Fujimori K."/>
            <person name="Tanai H."/>
            <person name="Kimata M."/>
            <person name="Watanabe M."/>
            <person name="Hiraoka S."/>
            <person name="Chiba Y."/>
            <person name="Ishida S."/>
            <person name="Ono Y."/>
            <person name="Takiguchi S."/>
            <person name="Watanabe S."/>
            <person name="Yosida M."/>
            <person name="Hotuta T."/>
            <person name="Kusano J."/>
            <person name="Kanehori K."/>
            <person name="Takahashi-Fujii A."/>
            <person name="Hara H."/>
            <person name="Tanase T.-O."/>
            <person name="Nomura Y."/>
            <person name="Togiya S."/>
            <person name="Komai F."/>
            <person name="Hara R."/>
            <person name="Takeuchi K."/>
            <person name="Arita M."/>
            <person name="Imose N."/>
            <person name="Musashino K."/>
            <person name="Yuuki H."/>
            <person name="Oshima A."/>
            <person name="Sasaki N."/>
            <person name="Aotsuka S."/>
            <person name="Yoshikawa Y."/>
            <person name="Matsunawa H."/>
            <person name="Ichihara T."/>
            <person name="Shiohata N."/>
            <person name="Sano S."/>
            <person name="Moriya S."/>
            <person name="Momiyama H."/>
            <person name="Satoh N."/>
            <person name="Takami S."/>
            <person name="Terashima Y."/>
            <person name="Suzuki O."/>
            <person name="Nakagawa S."/>
            <person name="Senoh A."/>
            <person name="Mizoguchi H."/>
            <person name="Goto Y."/>
            <person name="Shimizu F."/>
            <person name="Wakebe H."/>
            <person name="Hishigaki H."/>
            <person name="Watanabe T."/>
            <person name="Sugiyama A."/>
            <person name="Takemoto M."/>
            <person name="Kawakami B."/>
            <person name="Yamazaki M."/>
            <person name="Watanabe K."/>
            <person name="Kumagai A."/>
            <person name="Itakura S."/>
            <person name="Fukuzumi Y."/>
            <person name="Fujimori Y."/>
            <person name="Komiyama M."/>
            <person name="Tashiro H."/>
            <person name="Tanigami A."/>
            <person name="Fujiwara T."/>
            <person name="Ono T."/>
            <person name="Yamada K."/>
            <person name="Fujii Y."/>
            <person name="Ozaki K."/>
            <person name="Hirao M."/>
            <person name="Ohmori Y."/>
            <person name="Kawabata A."/>
            <person name="Hikiji T."/>
            <person name="Kobatake N."/>
            <person name="Inagaki H."/>
            <person name="Ikema Y."/>
            <person name="Okamoto S."/>
            <person name="Okitani R."/>
            <person name="Kawakami T."/>
            <person name="Noguchi S."/>
            <person name="Itoh T."/>
            <person name="Shigeta K."/>
            <person name="Senba T."/>
            <person name="Matsumura K."/>
            <person name="Nakajima Y."/>
            <person name="Mizuno T."/>
            <person name="Morinaga M."/>
            <person name="Sasaki M."/>
            <person name="Togashi T."/>
            <person name="Oyama M."/>
            <person name="Hata H."/>
            <person name="Watanabe M."/>
            <person name="Komatsu T."/>
            <person name="Mizushima-Sugano J."/>
            <person name="Satoh T."/>
            <person name="Shirai Y."/>
            <person name="Takahashi Y."/>
            <person name="Nakagawa K."/>
            <person name="Okumura K."/>
            <person name="Nagase T."/>
            <person name="Nomura N."/>
            <person name="Kikuchi H."/>
            <person name="Masuho Y."/>
            <person name="Yamashita R."/>
            <person name="Nakai K."/>
            <person name="Yada T."/>
            <person name="Nakamura Y."/>
            <person name="Ohara O."/>
            <person name="Isogai T."/>
            <person name="Sugano S."/>
        </authorList>
    </citation>
    <scope>NUCLEOTIDE SEQUENCE [LARGE SCALE MRNA] (ISOFORM 1)</scope>
    <scope>VARIANT ASP-11</scope>
    <source>
        <tissue>Testis</tissue>
    </source>
</reference>
<reference key="2">
    <citation type="journal article" date="2006" name="Nature">
        <title>The finished DNA sequence of human chromosome 12.</title>
        <authorList>
            <person name="Scherer S.E."/>
            <person name="Muzny D.M."/>
            <person name="Buhay C.J."/>
            <person name="Chen R."/>
            <person name="Cree A."/>
            <person name="Ding Y."/>
            <person name="Dugan-Rocha S."/>
            <person name="Gill R."/>
            <person name="Gunaratne P."/>
            <person name="Harris R.A."/>
            <person name="Hawes A.C."/>
            <person name="Hernandez J."/>
            <person name="Hodgson A.V."/>
            <person name="Hume J."/>
            <person name="Jackson A."/>
            <person name="Khan Z.M."/>
            <person name="Kovar-Smith C."/>
            <person name="Lewis L.R."/>
            <person name="Lozado R.J."/>
            <person name="Metzker M.L."/>
            <person name="Milosavljevic A."/>
            <person name="Miner G.R."/>
            <person name="Montgomery K.T."/>
            <person name="Morgan M.B."/>
            <person name="Nazareth L.V."/>
            <person name="Scott G."/>
            <person name="Sodergren E."/>
            <person name="Song X.-Z."/>
            <person name="Steffen D."/>
            <person name="Lovering R.C."/>
            <person name="Wheeler D.A."/>
            <person name="Worley K.C."/>
            <person name="Yuan Y."/>
            <person name="Zhang Z."/>
            <person name="Adams C.Q."/>
            <person name="Ansari-Lari M.A."/>
            <person name="Ayele M."/>
            <person name="Brown M.J."/>
            <person name="Chen G."/>
            <person name="Chen Z."/>
            <person name="Clerc-Blankenburg K.P."/>
            <person name="Davis C."/>
            <person name="Delgado O."/>
            <person name="Dinh H.H."/>
            <person name="Draper H."/>
            <person name="Gonzalez-Garay M.L."/>
            <person name="Havlak P."/>
            <person name="Jackson L.R."/>
            <person name="Jacob L.S."/>
            <person name="Kelly S.H."/>
            <person name="Li L."/>
            <person name="Li Z."/>
            <person name="Liu J."/>
            <person name="Liu W."/>
            <person name="Lu J."/>
            <person name="Maheshwari M."/>
            <person name="Nguyen B.-V."/>
            <person name="Okwuonu G.O."/>
            <person name="Pasternak S."/>
            <person name="Perez L.M."/>
            <person name="Plopper F.J.H."/>
            <person name="Santibanez J."/>
            <person name="Shen H."/>
            <person name="Tabor P.E."/>
            <person name="Verduzco D."/>
            <person name="Waldron L."/>
            <person name="Wang Q."/>
            <person name="Williams G.A."/>
            <person name="Zhang J."/>
            <person name="Zhou J."/>
            <person name="Allen C.C."/>
            <person name="Amin A.G."/>
            <person name="Anyalebechi V."/>
            <person name="Bailey M."/>
            <person name="Barbaria J.A."/>
            <person name="Bimage K.E."/>
            <person name="Bryant N.P."/>
            <person name="Burch P.E."/>
            <person name="Burkett C.E."/>
            <person name="Burrell K.L."/>
            <person name="Calderon E."/>
            <person name="Cardenas V."/>
            <person name="Carter K."/>
            <person name="Casias K."/>
            <person name="Cavazos I."/>
            <person name="Cavazos S.R."/>
            <person name="Ceasar H."/>
            <person name="Chacko J."/>
            <person name="Chan S.N."/>
            <person name="Chavez D."/>
            <person name="Christopoulos C."/>
            <person name="Chu J."/>
            <person name="Cockrell R."/>
            <person name="Cox C.D."/>
            <person name="Dang M."/>
            <person name="Dathorne S.R."/>
            <person name="David R."/>
            <person name="Davis C.M."/>
            <person name="Davy-Carroll L."/>
            <person name="Deshazo D.R."/>
            <person name="Donlin J.E."/>
            <person name="D'Souza L."/>
            <person name="Eaves K.A."/>
            <person name="Egan A."/>
            <person name="Emery-Cohen A.J."/>
            <person name="Escotto M."/>
            <person name="Flagg N."/>
            <person name="Forbes L.D."/>
            <person name="Gabisi A.M."/>
            <person name="Garza M."/>
            <person name="Hamilton C."/>
            <person name="Henderson N."/>
            <person name="Hernandez O."/>
            <person name="Hines S."/>
            <person name="Hogues M.E."/>
            <person name="Huang M."/>
            <person name="Idlebird D.G."/>
            <person name="Johnson R."/>
            <person name="Jolivet A."/>
            <person name="Jones S."/>
            <person name="Kagan R."/>
            <person name="King L.M."/>
            <person name="Leal B."/>
            <person name="Lebow H."/>
            <person name="Lee S."/>
            <person name="LeVan J.M."/>
            <person name="Lewis L.C."/>
            <person name="London P."/>
            <person name="Lorensuhewa L.M."/>
            <person name="Loulseged H."/>
            <person name="Lovett D.A."/>
            <person name="Lucier A."/>
            <person name="Lucier R.L."/>
            <person name="Ma J."/>
            <person name="Madu R.C."/>
            <person name="Mapua P."/>
            <person name="Martindale A.D."/>
            <person name="Martinez E."/>
            <person name="Massey E."/>
            <person name="Mawhiney S."/>
            <person name="Meador M.G."/>
            <person name="Mendez S."/>
            <person name="Mercado C."/>
            <person name="Mercado I.C."/>
            <person name="Merritt C.E."/>
            <person name="Miner Z.L."/>
            <person name="Minja E."/>
            <person name="Mitchell T."/>
            <person name="Mohabbat F."/>
            <person name="Mohabbat K."/>
            <person name="Montgomery B."/>
            <person name="Moore N."/>
            <person name="Morris S."/>
            <person name="Munidasa M."/>
            <person name="Ngo R.N."/>
            <person name="Nguyen N.B."/>
            <person name="Nickerson E."/>
            <person name="Nwaokelemeh O.O."/>
            <person name="Nwokenkwo S."/>
            <person name="Obregon M."/>
            <person name="Oguh M."/>
            <person name="Oragunye N."/>
            <person name="Oviedo R.J."/>
            <person name="Parish B.J."/>
            <person name="Parker D.N."/>
            <person name="Parrish J."/>
            <person name="Parks K.L."/>
            <person name="Paul H.A."/>
            <person name="Payton B.A."/>
            <person name="Perez A."/>
            <person name="Perrin W."/>
            <person name="Pickens A."/>
            <person name="Primus E.L."/>
            <person name="Pu L.-L."/>
            <person name="Puazo M."/>
            <person name="Quiles M.M."/>
            <person name="Quiroz J.B."/>
            <person name="Rabata D."/>
            <person name="Reeves K."/>
            <person name="Ruiz S.J."/>
            <person name="Shao H."/>
            <person name="Sisson I."/>
            <person name="Sonaike T."/>
            <person name="Sorelle R.P."/>
            <person name="Sutton A.E."/>
            <person name="Svatek A.F."/>
            <person name="Svetz L.A."/>
            <person name="Tamerisa K.S."/>
            <person name="Taylor T.R."/>
            <person name="Teague B."/>
            <person name="Thomas N."/>
            <person name="Thorn R.D."/>
            <person name="Trejos Z.Y."/>
            <person name="Trevino B.K."/>
            <person name="Ukegbu O.N."/>
            <person name="Urban J.B."/>
            <person name="Vasquez L.I."/>
            <person name="Vera V.A."/>
            <person name="Villasana D.M."/>
            <person name="Wang L."/>
            <person name="Ward-Moore S."/>
            <person name="Warren J.T."/>
            <person name="Wei X."/>
            <person name="White F."/>
            <person name="Williamson A.L."/>
            <person name="Wleczyk R."/>
            <person name="Wooden H.S."/>
            <person name="Wooden S.H."/>
            <person name="Yen J."/>
            <person name="Yoon L."/>
            <person name="Yoon V."/>
            <person name="Zorrilla S.E."/>
            <person name="Nelson D."/>
            <person name="Kucherlapati R."/>
            <person name="Weinstock G."/>
            <person name="Gibbs R.A."/>
        </authorList>
    </citation>
    <scope>NUCLEOTIDE SEQUENCE [LARGE SCALE GENOMIC DNA]</scope>
</reference>
<reference key="3">
    <citation type="journal article" date="2004" name="Genome Res.">
        <title>The status, quality, and expansion of the NIH full-length cDNA project: the Mammalian Gene Collection (MGC).</title>
        <authorList>
            <consortium name="The MGC Project Team"/>
        </authorList>
    </citation>
    <scope>NUCLEOTIDE SEQUENCE [LARGE SCALE MRNA] (ISOFORMS 1; 2 AND 3)</scope>
    <scope>VARIANT ASP-11</scope>
    <source>
        <tissue>Testis</tissue>
    </source>
</reference>
<comment type="alternative products">
    <event type="alternative splicing"/>
    <isoform>
        <id>Q96LP6-1</id>
        <name>1</name>
        <sequence type="displayed"/>
    </isoform>
    <isoform>
        <id>Q96LP6-2</id>
        <name>2</name>
        <sequence type="described" ref="VSP_022691"/>
    </isoform>
    <isoform>
        <id>Q96LP6-3</id>
        <name>3</name>
        <sequence type="described" ref="VSP_022692 VSP_022693"/>
    </isoform>
</comment>
<comment type="miscellaneous">
    <molecule>Isoform 3</molecule>
    <text evidence="5">May be produced at very low levels due to a premature stop codon in the mRNA, leading to nonsense-mediated mRNA decay.</text>
</comment>
<sequence>MSTVICMKQREEEFLLTIRPFANRMQKSPCYIPIVSSATLWDRSTPSAKHIPCYERTSVPCSRFINHMKNFSESPKFRSLHFLNFPVFPERTQNSMACKRLLHTCQYIVPRCSVSTVSFDEESYEEFRSSPAPSSETDEAPLIFTARGETEERARGAPKQAWNSSFLEQLVKKPNWAHSVNPVHLEAQGIHISRHTRPKGQPLSSPKKNSGSAARPSTAIGLCRRSQTPGALQSTGPSNTELEPEERMAVPAGAQAHPDDIQSRLLGASGNPVGKGAVAMAPEMLPKHPHTPRDRRPQADTSLHGNLAGAPLPLLAGASTHFPSKRLIKVCSSAPPRPTRRFHTVCSQALSRPVVNAHLH</sequence>